<reference key="1">
    <citation type="journal article" date="2002" name="Nature">
        <title>Sequence and analysis of rice chromosome 4.</title>
        <authorList>
            <person name="Feng Q."/>
            <person name="Zhang Y."/>
            <person name="Hao P."/>
            <person name="Wang S."/>
            <person name="Fu G."/>
            <person name="Huang Y."/>
            <person name="Li Y."/>
            <person name="Zhu J."/>
            <person name="Liu Y."/>
            <person name="Hu X."/>
            <person name="Jia P."/>
            <person name="Zhang Y."/>
            <person name="Zhao Q."/>
            <person name="Ying K."/>
            <person name="Yu S."/>
            <person name="Tang Y."/>
            <person name="Weng Q."/>
            <person name="Zhang L."/>
            <person name="Lu Y."/>
            <person name="Mu J."/>
            <person name="Lu Y."/>
            <person name="Zhang L.S."/>
            <person name="Yu Z."/>
            <person name="Fan D."/>
            <person name="Liu X."/>
            <person name="Lu T."/>
            <person name="Li C."/>
            <person name="Wu Y."/>
            <person name="Sun T."/>
            <person name="Lei H."/>
            <person name="Li T."/>
            <person name="Hu H."/>
            <person name="Guan J."/>
            <person name="Wu M."/>
            <person name="Zhang R."/>
            <person name="Zhou B."/>
            <person name="Chen Z."/>
            <person name="Chen L."/>
            <person name="Jin Z."/>
            <person name="Wang R."/>
            <person name="Yin H."/>
            <person name="Cai Z."/>
            <person name="Ren S."/>
            <person name="Lv G."/>
            <person name="Gu W."/>
            <person name="Zhu G."/>
            <person name="Tu Y."/>
            <person name="Jia J."/>
            <person name="Zhang Y."/>
            <person name="Chen J."/>
            <person name="Kang H."/>
            <person name="Chen X."/>
            <person name="Shao C."/>
            <person name="Sun Y."/>
            <person name="Hu Q."/>
            <person name="Zhang X."/>
            <person name="Zhang W."/>
            <person name="Wang L."/>
            <person name="Ding C."/>
            <person name="Sheng H."/>
            <person name="Gu J."/>
            <person name="Chen S."/>
            <person name="Ni L."/>
            <person name="Zhu F."/>
            <person name="Chen W."/>
            <person name="Lan L."/>
            <person name="Lai Y."/>
            <person name="Cheng Z."/>
            <person name="Gu M."/>
            <person name="Jiang J."/>
            <person name="Li J."/>
            <person name="Hong G."/>
            <person name="Xue Y."/>
            <person name="Han B."/>
        </authorList>
    </citation>
    <scope>NUCLEOTIDE SEQUENCE [LARGE SCALE GENOMIC DNA]</scope>
    <source>
        <strain>cv. Nipponbare</strain>
    </source>
</reference>
<reference key="2">
    <citation type="journal article" date="2005" name="Nature">
        <title>The map-based sequence of the rice genome.</title>
        <authorList>
            <consortium name="International rice genome sequencing project (IRGSP)"/>
        </authorList>
    </citation>
    <scope>NUCLEOTIDE SEQUENCE [LARGE SCALE GENOMIC DNA]</scope>
    <source>
        <strain>cv. Nipponbare</strain>
    </source>
</reference>
<reference key="3">
    <citation type="journal article" date="2008" name="Nucleic Acids Res.">
        <title>The rice annotation project database (RAP-DB): 2008 update.</title>
        <authorList>
            <consortium name="The rice annotation project (RAP)"/>
        </authorList>
    </citation>
    <scope>GENOME REANNOTATION</scope>
    <source>
        <strain>cv. Nipponbare</strain>
    </source>
</reference>
<reference key="4">
    <citation type="journal article" date="2013" name="Rice">
        <title>Improvement of the Oryza sativa Nipponbare reference genome using next generation sequence and optical map data.</title>
        <authorList>
            <person name="Kawahara Y."/>
            <person name="de la Bastide M."/>
            <person name="Hamilton J.P."/>
            <person name="Kanamori H."/>
            <person name="McCombie W.R."/>
            <person name="Ouyang S."/>
            <person name="Schwartz D.C."/>
            <person name="Tanaka T."/>
            <person name="Wu J."/>
            <person name="Zhou S."/>
            <person name="Childs K.L."/>
            <person name="Davidson R.M."/>
            <person name="Lin H."/>
            <person name="Quesada-Ocampo L."/>
            <person name="Vaillancourt B."/>
            <person name="Sakai H."/>
            <person name="Lee S.S."/>
            <person name="Kim J."/>
            <person name="Numa H."/>
            <person name="Itoh T."/>
            <person name="Buell C.R."/>
            <person name="Matsumoto T."/>
        </authorList>
    </citation>
    <scope>GENOME REANNOTATION</scope>
    <source>
        <strain>cv. Nipponbare</strain>
    </source>
</reference>
<reference key="5">
    <citation type="journal article" date="2005" name="PLoS Biol.">
        <title>The genomes of Oryza sativa: a history of duplications.</title>
        <authorList>
            <person name="Yu J."/>
            <person name="Wang J."/>
            <person name="Lin W."/>
            <person name="Li S."/>
            <person name="Li H."/>
            <person name="Zhou J."/>
            <person name="Ni P."/>
            <person name="Dong W."/>
            <person name="Hu S."/>
            <person name="Zeng C."/>
            <person name="Zhang J."/>
            <person name="Zhang Y."/>
            <person name="Li R."/>
            <person name="Xu Z."/>
            <person name="Li S."/>
            <person name="Li X."/>
            <person name="Zheng H."/>
            <person name="Cong L."/>
            <person name="Lin L."/>
            <person name="Yin J."/>
            <person name="Geng J."/>
            <person name="Li G."/>
            <person name="Shi J."/>
            <person name="Liu J."/>
            <person name="Lv H."/>
            <person name="Li J."/>
            <person name="Wang J."/>
            <person name="Deng Y."/>
            <person name="Ran L."/>
            <person name="Shi X."/>
            <person name="Wang X."/>
            <person name="Wu Q."/>
            <person name="Li C."/>
            <person name="Ren X."/>
            <person name="Wang J."/>
            <person name="Wang X."/>
            <person name="Li D."/>
            <person name="Liu D."/>
            <person name="Zhang X."/>
            <person name="Ji Z."/>
            <person name="Zhao W."/>
            <person name="Sun Y."/>
            <person name="Zhang Z."/>
            <person name="Bao J."/>
            <person name="Han Y."/>
            <person name="Dong L."/>
            <person name="Ji J."/>
            <person name="Chen P."/>
            <person name="Wu S."/>
            <person name="Liu J."/>
            <person name="Xiao Y."/>
            <person name="Bu D."/>
            <person name="Tan J."/>
            <person name="Yang L."/>
            <person name="Ye C."/>
            <person name="Zhang J."/>
            <person name="Xu J."/>
            <person name="Zhou Y."/>
            <person name="Yu Y."/>
            <person name="Zhang B."/>
            <person name="Zhuang S."/>
            <person name="Wei H."/>
            <person name="Liu B."/>
            <person name="Lei M."/>
            <person name="Yu H."/>
            <person name="Li Y."/>
            <person name="Xu H."/>
            <person name="Wei S."/>
            <person name="He X."/>
            <person name="Fang L."/>
            <person name="Zhang Z."/>
            <person name="Zhang Y."/>
            <person name="Huang X."/>
            <person name="Su Z."/>
            <person name="Tong W."/>
            <person name="Li J."/>
            <person name="Tong Z."/>
            <person name="Li S."/>
            <person name="Ye J."/>
            <person name="Wang L."/>
            <person name="Fang L."/>
            <person name="Lei T."/>
            <person name="Chen C.-S."/>
            <person name="Chen H.-C."/>
            <person name="Xu Z."/>
            <person name="Li H."/>
            <person name="Huang H."/>
            <person name="Zhang F."/>
            <person name="Xu H."/>
            <person name="Li N."/>
            <person name="Zhao C."/>
            <person name="Li S."/>
            <person name="Dong L."/>
            <person name="Huang Y."/>
            <person name="Li L."/>
            <person name="Xi Y."/>
            <person name="Qi Q."/>
            <person name="Li W."/>
            <person name="Zhang B."/>
            <person name="Hu W."/>
            <person name="Zhang Y."/>
            <person name="Tian X."/>
            <person name="Jiao Y."/>
            <person name="Liang X."/>
            <person name="Jin J."/>
            <person name="Gao L."/>
            <person name="Zheng W."/>
            <person name="Hao B."/>
            <person name="Liu S.-M."/>
            <person name="Wang W."/>
            <person name="Yuan L."/>
            <person name="Cao M."/>
            <person name="McDermott J."/>
            <person name="Samudrala R."/>
            <person name="Wang J."/>
            <person name="Wong G.K.-S."/>
            <person name="Yang H."/>
        </authorList>
    </citation>
    <scope>NUCLEOTIDE SEQUENCE [LARGE SCALE GENOMIC DNA]</scope>
    <source>
        <strain>cv. Nipponbare</strain>
    </source>
</reference>
<reference key="6">
    <citation type="journal article" date="2003" name="Science">
        <title>Collection, mapping, and annotation of over 28,000 cDNA clones from japonica rice.</title>
        <authorList>
            <consortium name="The rice full-length cDNA consortium"/>
        </authorList>
    </citation>
    <scope>NUCLEOTIDE SEQUENCE [LARGE SCALE MRNA]</scope>
    <source>
        <strain>cv. Nipponbare</strain>
    </source>
</reference>
<reference key="7">
    <citation type="journal article" date="2006" name="BMC Plant Biol.">
        <title>Analysis of rice glycosyl hydrolase family 1 and expression of Os4bglu12 beta-glucosidase.</title>
        <authorList>
            <person name="Opassiri R."/>
            <person name="Pomthong B."/>
            <person name="Onkoksoong T."/>
            <person name="Akiyama T."/>
            <person name="Esen A."/>
            <person name="Ketudat Cairns J.R."/>
        </authorList>
    </citation>
    <scope>GENE FAMILY</scope>
    <scope>NOMENCLATURE</scope>
</reference>
<name>BGL13_ORYSJ</name>
<keyword id="KW-1015">Disulfide bond</keyword>
<keyword id="KW-0325">Glycoprotein</keyword>
<keyword id="KW-0326">Glycosidase</keyword>
<keyword id="KW-0378">Hydrolase</keyword>
<keyword id="KW-1185">Reference proteome</keyword>
<keyword id="KW-0732">Signal</keyword>
<accession>Q7XKV2</accession>
<accession>A0A0P0WBI3</accession>
<organism>
    <name type="scientific">Oryza sativa subsp. japonica</name>
    <name type="common">Rice</name>
    <dbReference type="NCBI Taxonomy" id="39947"/>
    <lineage>
        <taxon>Eukaryota</taxon>
        <taxon>Viridiplantae</taxon>
        <taxon>Streptophyta</taxon>
        <taxon>Embryophyta</taxon>
        <taxon>Tracheophyta</taxon>
        <taxon>Spermatophyta</taxon>
        <taxon>Magnoliopsida</taxon>
        <taxon>Liliopsida</taxon>
        <taxon>Poales</taxon>
        <taxon>Poaceae</taxon>
        <taxon>BOP clade</taxon>
        <taxon>Oryzoideae</taxon>
        <taxon>Oryzeae</taxon>
        <taxon>Oryzinae</taxon>
        <taxon>Oryza</taxon>
        <taxon>Oryza sativa</taxon>
    </lineage>
</organism>
<dbReference type="EC" id="3.2.1.21" evidence="2"/>
<dbReference type="EMBL" id="AL731582">
    <property type="protein sequence ID" value="CAE05485.2"/>
    <property type="molecule type" value="Genomic_DNA"/>
</dbReference>
<dbReference type="EMBL" id="AP008210">
    <property type="protein sequence ID" value="BAF14985.1"/>
    <property type="molecule type" value="Genomic_DNA"/>
</dbReference>
<dbReference type="EMBL" id="AP014960">
    <property type="protein sequence ID" value="BAS89677.1"/>
    <property type="molecule type" value="Genomic_DNA"/>
</dbReference>
<dbReference type="EMBL" id="CM000141">
    <property type="protein sequence ID" value="EEE61180.1"/>
    <property type="molecule type" value="Genomic_DNA"/>
</dbReference>
<dbReference type="EMBL" id="AK070962">
    <property type="status" value="NOT_ANNOTATED_CDS"/>
    <property type="molecule type" value="mRNA"/>
</dbReference>
<dbReference type="SMR" id="Q7XKV2"/>
<dbReference type="FunCoup" id="Q7XKV2">
    <property type="interactions" value="470"/>
</dbReference>
<dbReference type="STRING" id="39947.Q7XKV2"/>
<dbReference type="CAZy" id="GH1">
    <property type="family name" value="Glycoside Hydrolase Family 1"/>
</dbReference>
<dbReference type="GlyCosmos" id="Q7XKV2">
    <property type="glycosylation" value="5 sites, No reported glycans"/>
</dbReference>
<dbReference type="PaxDb" id="39947-Q7XKV2"/>
<dbReference type="EnsemblPlants" id="Os04t0474900-01">
    <property type="protein sequence ID" value="Os04t0474900-01"/>
    <property type="gene ID" value="Os04g0474900"/>
</dbReference>
<dbReference type="Gramene" id="Os04t0474900-01">
    <property type="protein sequence ID" value="Os04t0474900-01"/>
    <property type="gene ID" value="Os04g0474900"/>
</dbReference>
<dbReference type="KEGG" id="dosa:Os04g0474900"/>
<dbReference type="eggNOG" id="KOG0626">
    <property type="taxonomic scope" value="Eukaryota"/>
</dbReference>
<dbReference type="HOGENOM" id="CLU_001859_1_0_1"/>
<dbReference type="InParanoid" id="Q7XKV2"/>
<dbReference type="OMA" id="NYYQTIT"/>
<dbReference type="Proteomes" id="UP000000763">
    <property type="component" value="Chromosome 4"/>
</dbReference>
<dbReference type="Proteomes" id="UP000007752">
    <property type="component" value="Chromosome 4"/>
</dbReference>
<dbReference type="Proteomes" id="UP000059680">
    <property type="component" value="Chromosome 4"/>
</dbReference>
<dbReference type="GO" id="GO:0033907">
    <property type="term" value="F:beta-D-fucosidase activity"/>
    <property type="evidence" value="ECO:0007669"/>
    <property type="project" value="UniProtKB-ARBA"/>
</dbReference>
<dbReference type="GO" id="GO:0004565">
    <property type="term" value="F:beta-galactosidase activity"/>
    <property type="evidence" value="ECO:0007669"/>
    <property type="project" value="UniProtKB-ARBA"/>
</dbReference>
<dbReference type="GO" id="GO:0008422">
    <property type="term" value="F:beta-glucosidase activity"/>
    <property type="evidence" value="ECO:0000318"/>
    <property type="project" value="GO_Central"/>
</dbReference>
<dbReference type="GO" id="GO:0005975">
    <property type="term" value="P:carbohydrate metabolic process"/>
    <property type="evidence" value="ECO:0007669"/>
    <property type="project" value="InterPro"/>
</dbReference>
<dbReference type="FunFam" id="3.20.20.80:FF:000020">
    <property type="entry name" value="Beta-glucosidase 12"/>
    <property type="match status" value="1"/>
</dbReference>
<dbReference type="Gene3D" id="3.20.20.80">
    <property type="entry name" value="Glycosidases"/>
    <property type="match status" value="1"/>
</dbReference>
<dbReference type="InterPro" id="IPR001360">
    <property type="entry name" value="Glyco_hydro_1"/>
</dbReference>
<dbReference type="InterPro" id="IPR033132">
    <property type="entry name" value="Glyco_hydro_1_N_CS"/>
</dbReference>
<dbReference type="InterPro" id="IPR017853">
    <property type="entry name" value="Glycoside_hydrolase_SF"/>
</dbReference>
<dbReference type="PANTHER" id="PTHR10353:SF154">
    <property type="entry name" value="BETA-GLUCOSIDASE 9-RELATED"/>
    <property type="match status" value="1"/>
</dbReference>
<dbReference type="PANTHER" id="PTHR10353">
    <property type="entry name" value="GLYCOSYL HYDROLASE"/>
    <property type="match status" value="1"/>
</dbReference>
<dbReference type="Pfam" id="PF00232">
    <property type="entry name" value="Glyco_hydro_1"/>
    <property type="match status" value="1"/>
</dbReference>
<dbReference type="PRINTS" id="PR00131">
    <property type="entry name" value="GLHYDRLASE1"/>
</dbReference>
<dbReference type="SUPFAM" id="SSF51445">
    <property type="entry name" value="(Trans)glycosidases"/>
    <property type="match status" value="1"/>
</dbReference>
<dbReference type="PROSITE" id="PS00653">
    <property type="entry name" value="GLYCOSYL_HYDROL_F1_2"/>
    <property type="match status" value="1"/>
</dbReference>
<protein>
    <recommendedName>
        <fullName>Beta-glucosidase 13</fullName>
        <shortName>Os4bglu13</shortName>
        <ecNumber evidence="2">3.2.1.21</ecNumber>
    </recommendedName>
</protein>
<sequence length="506" mass="57137">MAAAGEVVMLGGILLPLLLVVAVSGEPPPISRRSFPEGFIFGTASSSYQYEGGAREGGRGPSIWDTFTHQHPDKIADKSNGDVAADSYHLYKEDVRIMKDMGVDAYRFSISWTRILPNGSLSGGINREGISYYNNLINELLLKGVQPFVTLFHWDSPQALEDKYNGFLSPNIINDYKEYAETCFKEFGDRVKHWITFNEPLSFCVAGYASGGMFAPGRCSPWEGNCSAGDSGREPYTACHHQLLAHAETVRLYKEKYQVLQKGKIGITLVSNWFVPFSRSKSNIDAARRALDFMLGWFMDPLIRGEYPLSMRELVRNRLPQFTKEQSELIKGSFDFIGLNYYTSNYAGSLPPSNGLNNSYSTDARANLTAVRNGIPIGPQAASPWLYIYPQGFRELVLYVKENYGNPTIYITENGVDEFNNKTLPLQEALKDDTRIDYYHKHLLSLLSAIRDGANVKGYFAWSLLDNFEWSNGYTVRFGINFVDYNDGAKRYPKMSAHWFKEFLQK</sequence>
<evidence type="ECO:0000250" key="1">
    <source>
        <dbReference type="UniProtKB" id="Q1XH05"/>
    </source>
</evidence>
<evidence type="ECO:0000250" key="2">
    <source>
        <dbReference type="UniProtKB" id="Q75I94"/>
    </source>
</evidence>
<evidence type="ECO:0000250" key="3">
    <source>
        <dbReference type="UniProtKB" id="Q7XSK0"/>
    </source>
</evidence>
<evidence type="ECO:0000250" key="4">
    <source>
        <dbReference type="UniProtKB" id="Q9SPP9"/>
    </source>
</evidence>
<evidence type="ECO:0000255" key="5"/>
<evidence type="ECO:0000255" key="6">
    <source>
        <dbReference type="PROSITE-ProRule" id="PRU00498"/>
    </source>
</evidence>
<evidence type="ECO:0000305" key="7"/>
<comment type="catalytic activity">
    <reaction evidence="2">
        <text>Hydrolysis of terminal, non-reducing beta-D-glucosyl residues with release of beta-D-glucose.</text>
        <dbReference type="EC" id="3.2.1.21"/>
    </reaction>
</comment>
<comment type="similarity">
    <text evidence="7">Belongs to the glycosyl hydrolase 1 family.</text>
</comment>
<gene>
    <name type="primary">BGLU13</name>
    <name type="ordered locus">Os04g0474900</name>
    <name type="ordered locus">LOC_Os04g39900</name>
    <name type="ORF">OsJ_15167</name>
    <name type="ORF">OSJNBa0022H21.5</name>
</gene>
<feature type="signal peptide" evidence="5">
    <location>
        <begin position="1"/>
        <end position="25"/>
    </location>
</feature>
<feature type="chain" id="PRO_0000390330" description="Beta-glucosidase 13">
    <location>
        <begin position="26"/>
        <end position="506"/>
    </location>
</feature>
<feature type="active site" description="Proton donor" evidence="3">
    <location>
        <position position="199"/>
    </location>
</feature>
<feature type="active site" description="Nucleophile" evidence="3">
    <location>
        <position position="413"/>
    </location>
</feature>
<feature type="binding site" evidence="3">
    <location>
        <position position="49"/>
    </location>
    <ligand>
        <name>a beta-D-glucoside</name>
        <dbReference type="ChEBI" id="CHEBI:22798"/>
    </ligand>
</feature>
<feature type="binding site" evidence="3">
    <location>
        <position position="153"/>
    </location>
    <ligand>
        <name>a beta-D-glucoside</name>
        <dbReference type="ChEBI" id="CHEBI:22798"/>
    </ligand>
</feature>
<feature type="binding site" evidence="3">
    <location>
        <begin position="198"/>
        <end position="199"/>
    </location>
    <ligand>
        <name>a beta-D-glucoside</name>
        <dbReference type="ChEBI" id="CHEBI:22798"/>
    </ligand>
</feature>
<feature type="binding site" evidence="3">
    <location>
        <position position="342"/>
    </location>
    <ligand>
        <name>a beta-D-glucoside</name>
        <dbReference type="ChEBI" id="CHEBI:22798"/>
    </ligand>
</feature>
<feature type="binding site" evidence="4">
    <location>
        <position position="413"/>
    </location>
    <ligand>
        <name>a beta-D-glucoside</name>
        <dbReference type="ChEBI" id="CHEBI:22798"/>
    </ligand>
</feature>
<feature type="binding site" evidence="3">
    <location>
        <position position="462"/>
    </location>
    <ligand>
        <name>a beta-D-glucoside</name>
        <dbReference type="ChEBI" id="CHEBI:22798"/>
    </ligand>
</feature>
<feature type="binding site" evidence="3">
    <location>
        <begin position="469"/>
        <end position="470"/>
    </location>
    <ligand>
        <name>a beta-D-glucoside</name>
        <dbReference type="ChEBI" id="CHEBI:22798"/>
    </ligand>
</feature>
<feature type="binding site" evidence="1">
    <location>
        <position position="478"/>
    </location>
    <ligand>
        <name>a beta-D-glucoside</name>
        <dbReference type="ChEBI" id="CHEBI:22798"/>
    </ligand>
</feature>
<feature type="glycosylation site" description="N-linked (GlcNAc...) asparagine" evidence="6">
    <location>
        <position position="118"/>
    </location>
</feature>
<feature type="glycosylation site" description="N-linked (GlcNAc...) asparagine" evidence="6">
    <location>
        <position position="225"/>
    </location>
</feature>
<feature type="glycosylation site" description="N-linked (GlcNAc...) asparagine" evidence="6">
    <location>
        <position position="357"/>
    </location>
</feature>
<feature type="glycosylation site" description="N-linked (GlcNAc...) asparagine" evidence="6">
    <location>
        <position position="367"/>
    </location>
</feature>
<feature type="glycosylation site" description="N-linked (GlcNAc...) asparagine" evidence="6">
    <location>
        <position position="421"/>
    </location>
</feature>
<feature type="disulfide bond" evidence="3">
    <location>
        <begin position="219"/>
        <end position="226"/>
    </location>
</feature>
<proteinExistence type="evidence at transcript level"/>